<feature type="transit peptide" description="Mitochondrion" evidence="3">
    <location>
        <begin position="1"/>
        <end status="unknown"/>
    </location>
</feature>
<feature type="chain" id="PRO_0000322998" description="Hydroxyacid-oxoacid transhydrogenase, mitochondrial">
    <location>
        <begin status="unknown"/>
        <end position="467"/>
    </location>
</feature>
<feature type="modified residue" description="N6-acetyllysine" evidence="2">
    <location>
        <position position="445"/>
    </location>
</feature>
<feature type="modified residue" description="Phosphoserine" evidence="2">
    <location>
        <position position="452"/>
    </location>
</feature>
<feature type="splice variant" id="VSP_031988" description="In isoform 2." evidence="4">
    <location>
        <begin position="1"/>
        <end position="48"/>
    </location>
</feature>
<feature type="sequence conflict" description="In Ref. 1; CAH91375." evidence="5" ref="1">
    <original>V</original>
    <variation>A</variation>
    <location>
        <position position="60"/>
    </location>
</feature>
<feature type="sequence conflict" description="In Ref. 1; CAH93025/CAH91375." evidence="5" ref="1">
    <original>M</original>
    <variation>K</variation>
    <location>
        <position position="147"/>
    </location>
</feature>
<feature type="sequence conflict" description="In Ref. 1; CAH93025." evidence="5" ref="1">
    <original>Y</original>
    <variation>H</variation>
    <location>
        <position position="163"/>
    </location>
</feature>
<feature type="sequence conflict" description="In Ref. 1; CAH91375." evidence="5" ref="1">
    <original>L</original>
    <variation>P</variation>
    <location>
        <position position="254"/>
    </location>
</feature>
<keyword id="KW-0007">Acetylation</keyword>
<keyword id="KW-0025">Alternative splicing</keyword>
<keyword id="KW-0443">Lipid metabolism</keyword>
<keyword id="KW-0496">Mitochondrion</keyword>
<keyword id="KW-0560">Oxidoreductase</keyword>
<keyword id="KW-0597">Phosphoprotein</keyword>
<keyword id="KW-1185">Reference proteome</keyword>
<keyword id="KW-0809">Transit peptide</keyword>
<evidence type="ECO:0000250" key="1"/>
<evidence type="ECO:0000250" key="2">
    <source>
        <dbReference type="UniProtKB" id="Q8R0N6"/>
    </source>
</evidence>
<evidence type="ECO:0000255" key="3"/>
<evidence type="ECO:0000303" key="4">
    <source ref="1"/>
</evidence>
<evidence type="ECO:0000305" key="5"/>
<proteinExistence type="evidence at transcript level"/>
<dbReference type="EC" id="1.1.99.24"/>
<dbReference type="EMBL" id="CR857350">
    <property type="protein sequence ID" value="CAH89646.1"/>
    <property type="molecule type" value="mRNA"/>
</dbReference>
<dbReference type="EMBL" id="CR859187">
    <property type="protein sequence ID" value="CAH91375.1"/>
    <property type="molecule type" value="mRNA"/>
</dbReference>
<dbReference type="EMBL" id="CR860920">
    <property type="protein sequence ID" value="CAH93025.1"/>
    <property type="molecule type" value="mRNA"/>
</dbReference>
<dbReference type="RefSeq" id="NP_001127410.1">
    <property type="nucleotide sequence ID" value="NM_001133938.1"/>
</dbReference>
<dbReference type="RefSeq" id="NP_001128888.1">
    <property type="nucleotide sequence ID" value="NM_001135416.1"/>
</dbReference>
<dbReference type="SMR" id="Q5RF11"/>
<dbReference type="FunCoup" id="Q5RF11">
    <property type="interactions" value="583"/>
</dbReference>
<dbReference type="STRING" id="9601.ENSPPYP00000020906"/>
<dbReference type="GeneID" id="100189822"/>
<dbReference type="KEGG" id="pon:100189822"/>
<dbReference type="CTD" id="137872"/>
<dbReference type="eggNOG" id="KOG3857">
    <property type="taxonomic scope" value="Eukaryota"/>
</dbReference>
<dbReference type="InParanoid" id="Q5RF11"/>
<dbReference type="OrthoDB" id="339764at2759"/>
<dbReference type="Proteomes" id="UP000001595">
    <property type="component" value="Unplaced"/>
</dbReference>
<dbReference type="GO" id="GO:0005739">
    <property type="term" value="C:mitochondrion"/>
    <property type="evidence" value="ECO:0000250"/>
    <property type="project" value="UniProtKB"/>
</dbReference>
<dbReference type="GO" id="GO:0004022">
    <property type="term" value="F:alcohol dehydrogenase (NAD+) activity"/>
    <property type="evidence" value="ECO:0007669"/>
    <property type="project" value="InterPro"/>
</dbReference>
<dbReference type="GO" id="GO:0047988">
    <property type="term" value="F:hydroxyacid-oxoacid transhydrogenase activity"/>
    <property type="evidence" value="ECO:0000250"/>
    <property type="project" value="UniProtKB"/>
</dbReference>
<dbReference type="GO" id="GO:0046872">
    <property type="term" value="F:metal ion binding"/>
    <property type="evidence" value="ECO:0007669"/>
    <property type="project" value="InterPro"/>
</dbReference>
<dbReference type="GO" id="GO:0019552">
    <property type="term" value="P:glutamate catabolic process via 2-hydroxyglutarate"/>
    <property type="evidence" value="ECO:0000250"/>
    <property type="project" value="UniProtKB"/>
</dbReference>
<dbReference type="GO" id="GO:0006629">
    <property type="term" value="P:lipid metabolic process"/>
    <property type="evidence" value="ECO:0007669"/>
    <property type="project" value="UniProtKB-KW"/>
</dbReference>
<dbReference type="CDD" id="cd08190">
    <property type="entry name" value="HOT"/>
    <property type="match status" value="1"/>
</dbReference>
<dbReference type="FunFam" id="1.20.1090.10:FF:000003">
    <property type="entry name" value="Probable hydroxyacid-oxoacid transhydrogenase, mitochondrial"/>
    <property type="match status" value="1"/>
</dbReference>
<dbReference type="FunFam" id="3.40.50.1970:FF:000010">
    <property type="entry name" value="Probable hydroxyacid-oxoacid transhydrogenase, mitochondrial"/>
    <property type="match status" value="1"/>
</dbReference>
<dbReference type="Gene3D" id="3.40.50.1970">
    <property type="match status" value="1"/>
</dbReference>
<dbReference type="Gene3D" id="1.20.1090.10">
    <property type="entry name" value="Dehydroquinate synthase-like - alpha domain"/>
    <property type="match status" value="1"/>
</dbReference>
<dbReference type="InterPro" id="IPR001670">
    <property type="entry name" value="ADH_Fe/GldA"/>
</dbReference>
<dbReference type="InterPro" id="IPR056798">
    <property type="entry name" value="ADH_Fe_C"/>
</dbReference>
<dbReference type="InterPro" id="IPR039697">
    <property type="entry name" value="Alcohol_dehydrogenase_Fe"/>
</dbReference>
<dbReference type="InterPro" id="IPR042157">
    <property type="entry name" value="HOT"/>
</dbReference>
<dbReference type="PANTHER" id="PTHR11496">
    <property type="entry name" value="ALCOHOL DEHYDROGENASE"/>
    <property type="match status" value="1"/>
</dbReference>
<dbReference type="PANTHER" id="PTHR11496:SF83">
    <property type="entry name" value="HYDROXYACID-OXOACID TRANSHYDROGENASE, MITOCHONDRIAL"/>
    <property type="match status" value="1"/>
</dbReference>
<dbReference type="Pfam" id="PF25137">
    <property type="entry name" value="ADH_Fe_C"/>
    <property type="match status" value="1"/>
</dbReference>
<dbReference type="Pfam" id="PF00465">
    <property type="entry name" value="Fe-ADH"/>
    <property type="match status" value="1"/>
</dbReference>
<dbReference type="SUPFAM" id="SSF56796">
    <property type="entry name" value="Dehydroquinate synthase-like"/>
    <property type="match status" value="1"/>
</dbReference>
<protein>
    <recommendedName>
        <fullName>Hydroxyacid-oxoacid transhydrogenase, mitochondrial</fullName>
        <shortName>HOT</shortName>
        <ecNumber>1.1.99.24</ecNumber>
    </recommendedName>
    <alternativeName>
        <fullName>Alcohol dehydrogenase iron-containing protein 1</fullName>
        <shortName>ADHFe1</shortName>
    </alternativeName>
</protein>
<comment type="function">
    <text evidence="1">Catalyzes the cofactor-independent reversible oxidation of gamma-hydroxybutyrate (GHB) to succinic semialdehyde (SSA) coupled to reduction of 2-ketoglutarate (2-KG) to D-2-hydroxyglutarate (D-2-HG). L-3-hydroxybutyrate (L-3-OHB) is also a substrate for HOT when using 2-KG as hydrogen acceptor, resulting in the formation of D-2-HG (By similarity).</text>
</comment>
<comment type="catalytic activity">
    <reaction>
        <text>(S)-3-hydroxybutanoate + 2-oxoglutarate = (R)-2-hydroxyglutarate + acetoacetate</text>
        <dbReference type="Rhea" id="RHEA:23048"/>
        <dbReference type="ChEBI" id="CHEBI:11047"/>
        <dbReference type="ChEBI" id="CHEBI:13705"/>
        <dbReference type="ChEBI" id="CHEBI:15801"/>
        <dbReference type="ChEBI" id="CHEBI:16810"/>
        <dbReference type="EC" id="1.1.99.24"/>
    </reaction>
</comment>
<comment type="catalytic activity">
    <reaction>
        <text>4-hydroxybutanoate + 2-oxoglutarate = (R)-2-hydroxyglutarate + succinate semialdehyde</text>
        <dbReference type="Rhea" id="RHEA:24734"/>
        <dbReference type="ChEBI" id="CHEBI:15801"/>
        <dbReference type="ChEBI" id="CHEBI:16724"/>
        <dbReference type="ChEBI" id="CHEBI:16810"/>
        <dbReference type="ChEBI" id="CHEBI:57706"/>
        <dbReference type="EC" id="1.1.99.24"/>
    </reaction>
</comment>
<comment type="subcellular location">
    <subcellularLocation>
        <location evidence="1">Mitochondrion</location>
    </subcellularLocation>
</comment>
<comment type="alternative products">
    <event type="alternative splicing"/>
    <isoform>
        <id>Q5RF11-1</id>
        <name>1</name>
        <sequence type="displayed"/>
    </isoform>
    <isoform>
        <id>Q5RF11-2</id>
        <name>2</name>
        <sequence type="described" ref="VSP_031988"/>
    </isoform>
</comment>
<comment type="similarity">
    <text evidence="5">Belongs to the iron-containing alcohol dehydrogenase family. Hydroxyacid-oxoacid transhydrogenase subfamily.</text>
</comment>
<reference key="1">
    <citation type="submission" date="2004-11" db="EMBL/GenBank/DDBJ databases">
        <authorList>
            <consortium name="The German cDNA consortium"/>
        </authorList>
    </citation>
    <scope>NUCLEOTIDE SEQUENCE [LARGE SCALE MRNA] (ISOFORMS 1 AND 2)</scope>
    <source>
        <tissue>Kidney</tissue>
    </source>
</reference>
<organism>
    <name type="scientific">Pongo abelii</name>
    <name type="common">Sumatran orangutan</name>
    <name type="synonym">Pongo pygmaeus abelii</name>
    <dbReference type="NCBI Taxonomy" id="9601"/>
    <lineage>
        <taxon>Eukaryota</taxon>
        <taxon>Metazoa</taxon>
        <taxon>Chordata</taxon>
        <taxon>Craniata</taxon>
        <taxon>Vertebrata</taxon>
        <taxon>Euteleostomi</taxon>
        <taxon>Mammalia</taxon>
        <taxon>Eutheria</taxon>
        <taxon>Euarchontoglires</taxon>
        <taxon>Primates</taxon>
        <taxon>Haplorrhini</taxon>
        <taxon>Catarrhini</taxon>
        <taxon>Hominidae</taxon>
        <taxon>Pongo</taxon>
    </lineage>
</organism>
<sequence>MAAASRARVAYLLRQLQRAACQCPTHSHTYSQAPGLSPSGKTTDYAFEMAVSNIRYGAGVTKEVGMDLQNMGAKNVCLMTDKNLSKLPPVQVAMDSLVKNGIPFTVYDNVRVEPTDASFMEAIEFAQKGAFDAYVAVGGGSTMDTCMAANLYASSPHSDFLDYVSAPIGKGKPVSVPLKPLIAVPTTSGTGSETTGVAIFDYEHLKVKIGIASRAIKPTLGLIDPLHTLHMPARVVANSGFDVLCHALESYTTLPYHLRSPCPSNPITRPAYQGSNPISDIWAIHALRIVAKYLKRAVRNPDDLEARSHMHLASAFAGIGFGNAGVHLCHGMSYPISGLVKTYKAKDYNVDHPLVPHGLSVVLTSPAVFTFTAQMFPERHLETAEILGADTRTARIQDAGLVLADTLRKFLFDLDVDDGLAAVGYSKADIPALVKGTLPQERVTKLAPRPQSEEDLAALFEASMKLY</sequence>
<gene>
    <name type="primary">ADHFE1</name>
</gene>
<name>HOT_PONAB</name>
<accession>Q5RF11</accession>
<accession>Q5R5E1</accession>
<accession>Q5RA35</accession>